<proteinExistence type="evidence at protein level"/>
<gene>
    <name type="primary">toxA</name>
</gene>
<name>TOXA_PASMD</name>
<evidence type="ECO:0000255" key="1"/>
<evidence type="ECO:0000305" key="2"/>
<evidence type="ECO:0007829" key="3">
    <source>
        <dbReference type="PDB" id="2EBF"/>
    </source>
</evidence>
<evidence type="ECO:0007829" key="4">
    <source>
        <dbReference type="PDB" id="2EBH"/>
    </source>
</evidence>
<evidence type="ECO:0007829" key="5">
    <source>
        <dbReference type="PDB" id="2EC5"/>
    </source>
</evidence>
<evidence type="ECO:0007829" key="6">
    <source>
        <dbReference type="PDB" id="2N9V"/>
    </source>
</evidence>
<reference key="1">
    <citation type="journal article" date="1990" name="Mol. Microbiol.">
        <title>The complete nucleotide sequence of the Pasteurella multocida toxin gene and evidence for a transcriptional repressor, TxaR.</title>
        <authorList>
            <person name="Petersen S.K."/>
        </authorList>
    </citation>
    <scope>NUCLEOTIDE SEQUENCE [GENOMIC DNA]</scope>
    <source>
        <strain>NCTC 12178</strain>
    </source>
</reference>
<reference key="2">
    <citation type="journal article" date="1990" name="Nucleic Acids Res.">
        <title>Sequence of the dermonecrotic toxin of Pasteurella multocida ssp. multocida.</title>
        <authorList>
            <person name="Buys W.E.C.M."/>
            <person name="Smith H.E."/>
            <person name="Kamps A.M.I.E."/>
            <person name="Kamp E.M."/>
            <person name="Smits M.A."/>
        </authorList>
    </citation>
    <scope>NUCLEOTIDE SEQUENCE [GENOMIC DNA]</scope>
    <source>
        <strain>CVI 47459</strain>
    </source>
</reference>
<reference key="3">
    <citation type="journal article" date="1990" name="FEBS Lett.">
        <title>Sequence analysis of the potent mitogenic toxin of Pasteurella multocida.</title>
        <authorList>
            <person name="Lax A.J."/>
            <person name="Chanter N."/>
            <person name="Pullinger G.D."/>
            <person name="Higgins T."/>
            <person name="Staddon J.M."/>
            <person name="Rozengurt E."/>
        </authorList>
    </citation>
    <scope>NUCLEOTIDE SEQUENCE [GENOMIC DNA]</scope>
    <source>
        <strain>LFB3</strain>
    </source>
</reference>
<reference key="4">
    <citation type="submission" date="2000-03" db="EMBL/GenBank/DDBJ databases">
        <authorList>
            <person name="Chang G.-N."/>
            <person name="Ho K.-C."/>
        </authorList>
    </citation>
    <scope>NUCLEOTIDE SEQUENCE [GENOMIC DNA]</scope>
    <source>
        <strain>CH05</strain>
    </source>
</reference>
<keyword id="KW-0002">3D-structure</keyword>
<keyword id="KW-0963">Cytoplasm</keyword>
<keyword id="KW-1043">Host membrane</keyword>
<keyword id="KW-0472">Membrane</keyword>
<keyword id="KW-0964">Secreted</keyword>
<keyword id="KW-0800">Toxin</keyword>
<keyword id="KW-0812">Transmembrane</keyword>
<keyword id="KW-1133">Transmembrane helix</keyword>
<keyword id="KW-0843">Virulence</keyword>
<accession>P17452</accession>
<accession>Q57008</accession>
<comment type="function">
    <text>This is a dermonecrotic toxin. This osteolytic toxin, induces bone resorption. Potent mitogen. This toxin is associated with the severe progressive form of the atrophic rhinitis, a major respiratory disease in pigs.</text>
</comment>
<comment type="interaction">
    <interactant intactId="EBI-9541048">
        <id>P17452</id>
    </interactant>
    <interactant intactId="EBI-299269">
        <id>P20152</id>
        <label>Vim</label>
    </interactant>
    <organismsDiffer>true</organismsDiffer>
    <experiments>4</experiments>
</comment>
<comment type="subcellular location">
    <subcellularLocation>
        <location evidence="2">Cytoplasm</location>
    </subcellularLocation>
    <subcellularLocation>
        <location evidence="2">Secreted</location>
    </subcellularLocation>
    <subcellularLocation>
        <location evidence="2">Host membrane</location>
        <topology evidence="2">Single-pass membrane protein</topology>
    </subcellularLocation>
</comment>
<comment type="miscellaneous">
    <text>Closely spaced cysteine and histidine residues may provide the toxin with an affinity for metal.</text>
</comment>
<comment type="miscellaneous">
    <text>The sequence shown is that of strain NCTC 12178.</text>
</comment>
<sequence length="1285" mass="146383">MKTKHFFNSDFTVKGKSADEIFRRLCTDHPDKQLNNVKWKEVFINRFGQMMLDTPNPRKIVEKIINEGLEKQGLKNIDPETTYFNIFSSSDSSDGNVFHYNSLSESYRVTDACLMNIFVERYFDDWDLLNSLASNGIYSVGKEGAYYPDHDYGPEYNPVWGPNEQIYHSRVIADILYARSVWDEFKKYFMEYWQKYAQLYTEMLSDTFLAMAIQQYTRQTLTDEGFLMVCNTYYGNKEEVQITLLDIYGYPSTDIICIEQKGLPTPKVILYIPGGTQPFVEFLNTDDLKQWIAWHLKDNKHMVAFRKHFSLKQRQEGETFTGIDKALQYIAEESPEWPANKYILYNPTHLETENLFNIMMKRTEQRMLEDSDVQIRSNSEATRDYALSLLETFISQLSAIDMLVPAVGIPINFALSATALGLSSDIVVNGDSYEKRKYGIGSLVQSALFTGINLIPVISETAEILSSFSRTEEDIPAFFTEEQALAQRFEIVEEELHSISPDDPPREITDENLHKIRLVRLNNENQPLVVLRRLGGNKFIRIEPITFQEIKGSLVSEVINPVTNKTYYVSNAKLLGGSPYSPFRIGLEGVWTPEVLKARASVIGKPIGESYKRILAKLQRIHNSNILDERQGLMHELMELIDLYEESQPSSERLNAFRELRTQLEKALYLPEMEALKKQILQIPNKGSGAARFLLRTAMNEMAGKTSESTADLIRFALQDTVISAPFRGYAGAIPEAIDFPVKYVIEDISVFDKIQTNYWELPAYESWNEGSNSALLPGLLRESQSKGMLSKCRIIENSLYIGHSYEEMFYSISPYSNQVGGPYELYPFTFFSMLQEVQGDLGFEQAFATRNFFNTLVSDRLSLMENTMLLTESFDYTPWDAIYGDINYDEQFAAMSINERIEKCMNTYRGVAFQNSSKSIDFFLNNLTTFIDNGLTEIAISDLPYDIVQQEISQFLQGSNEWKTLDAMLFNLDKGDINGAFRKLLQSAKDNNIKFRAIGHSDNSVPPFNNPYKSLYYKGNIIAEAIEKLDREGQKFVVFADSSLLNSTPGTGRPMPGLVQYLKIPATVVDSDGAWQFLPDVASSRVPIEVTELENWQVLTPPQGKILGLKQFKLTAGFPTEQSRLPLLENSVSEDLREELMQKIDAIKNDVKMNSLVCMEAGSCDSVSPKVAARLKDMGLEAGMGASITWWRREGGMEFSHQMHTTASFKFAGKEFAVDASHLQFVHDQLDTTILILPVDDWALEIAQRNRAINPFVEYVSKTGNMLALFMPPLFTKPRLTRAL</sequence>
<dbReference type="EMBL" id="X51512">
    <property type="protein sequence ID" value="CAA35885.1"/>
    <property type="molecule type" value="Genomic_DNA"/>
</dbReference>
<dbReference type="EMBL" id="X52478">
    <property type="protein sequence ID" value="CAA36717.1"/>
    <property type="molecule type" value="Genomic_DNA"/>
</dbReference>
<dbReference type="EMBL" id="Z28388">
    <property type="protein sequence ID" value="CAA82233.1"/>
    <property type="molecule type" value="Genomic_DNA"/>
</dbReference>
<dbReference type="EMBL" id="X57775">
    <property type="protein sequence ID" value="CAA40921.1"/>
    <property type="molecule type" value="Genomic_DNA"/>
</dbReference>
<dbReference type="EMBL" id="AF240778">
    <property type="protein sequence ID" value="AAL55665.1"/>
    <property type="molecule type" value="Genomic_DNA"/>
</dbReference>
<dbReference type="PIR" id="S12998">
    <property type="entry name" value="BTQPD"/>
</dbReference>
<dbReference type="RefSeq" id="WP_015691094.1">
    <property type="nucleotide sequence ID" value="NZ_JAPEVQ010000029.1"/>
</dbReference>
<dbReference type="PDB" id="2EBF">
    <property type="method" value="X-ray"/>
    <property type="resolution" value="1.90 A"/>
    <property type="chains" value="X=569-1285"/>
</dbReference>
<dbReference type="PDB" id="2EBH">
    <property type="method" value="X-ray"/>
    <property type="resolution" value="2.40 A"/>
    <property type="chains" value="X=569-1285"/>
</dbReference>
<dbReference type="PDB" id="2EC5">
    <property type="method" value="X-ray"/>
    <property type="resolution" value="2.60 A"/>
    <property type="chains" value="A/B=569-1285"/>
</dbReference>
<dbReference type="PDB" id="2N9V">
    <property type="method" value="NMR"/>
    <property type="chains" value="A=589-668"/>
</dbReference>
<dbReference type="PDBsum" id="2EBF"/>
<dbReference type="PDBsum" id="2EBH"/>
<dbReference type="PDBsum" id="2EC5"/>
<dbReference type="PDBsum" id="2N9V"/>
<dbReference type="BMRB" id="P17452"/>
<dbReference type="SMR" id="P17452"/>
<dbReference type="IntAct" id="P17452">
    <property type="interactions" value="2"/>
</dbReference>
<dbReference type="TCDB" id="1.C.57.3.1">
    <property type="family name" value="the clostridial cytotoxin (cct) family"/>
</dbReference>
<dbReference type="EvolutionaryTrace" id="P17452"/>
<dbReference type="GO" id="GO:0005737">
    <property type="term" value="C:cytoplasm"/>
    <property type="evidence" value="ECO:0007669"/>
    <property type="project" value="UniProtKB-SubCell"/>
</dbReference>
<dbReference type="GO" id="GO:0005576">
    <property type="term" value="C:extracellular region"/>
    <property type="evidence" value="ECO:0007669"/>
    <property type="project" value="UniProtKB-SubCell"/>
</dbReference>
<dbReference type="GO" id="GO:0020002">
    <property type="term" value="C:host cell plasma membrane"/>
    <property type="evidence" value="ECO:0000315"/>
    <property type="project" value="AgBase"/>
</dbReference>
<dbReference type="GO" id="GO:0016020">
    <property type="term" value="C:membrane"/>
    <property type="evidence" value="ECO:0007669"/>
    <property type="project" value="UniProtKB-KW"/>
</dbReference>
<dbReference type="GO" id="GO:0004620">
    <property type="term" value="F:phospholipase activity"/>
    <property type="evidence" value="ECO:0000315"/>
    <property type="project" value="AgBase"/>
</dbReference>
<dbReference type="GO" id="GO:0005543">
    <property type="term" value="F:phospholipid binding"/>
    <property type="evidence" value="ECO:0000315"/>
    <property type="project" value="AgBase"/>
</dbReference>
<dbReference type="GO" id="GO:0090729">
    <property type="term" value="F:toxin activity"/>
    <property type="evidence" value="ECO:0007669"/>
    <property type="project" value="UniProtKB-KW"/>
</dbReference>
<dbReference type="GO" id="GO:0001907">
    <property type="term" value="P:symbiont-mediated killing of host cell"/>
    <property type="evidence" value="ECO:0000314"/>
    <property type="project" value="CACAO"/>
</dbReference>
<dbReference type="GO" id="GO:0044071">
    <property type="term" value="P:symbiont-mediated perturbation of host cell cycle progression"/>
    <property type="evidence" value="ECO:0000304"/>
    <property type="project" value="SigSci"/>
</dbReference>
<dbReference type="GO" id="GO:0075118">
    <property type="term" value="P:symbiont-mediated perturbation of host G protein-coupled receptor signal transduction pathway"/>
    <property type="evidence" value="ECO:0000315"/>
    <property type="project" value="AgBase"/>
</dbReference>
<dbReference type="CDD" id="cd14787">
    <property type="entry name" value="Tiki_TraB-like"/>
    <property type="match status" value="1"/>
</dbReference>
<dbReference type="CDD" id="cd21058">
    <property type="entry name" value="toxin_MLD_like"/>
    <property type="match status" value="1"/>
</dbReference>
<dbReference type="Gene3D" id="1.20.140.180">
    <property type="match status" value="1"/>
</dbReference>
<dbReference type="Gene3D" id="3.40.50.11550">
    <property type="match status" value="1"/>
</dbReference>
<dbReference type="Gene3D" id="3.10.670.10">
    <property type="entry name" value="Secreted effector protein ssei"/>
    <property type="match status" value="1"/>
</dbReference>
<dbReference type="InterPro" id="IPR020972">
    <property type="entry name" value="Dermonecrotic/RTX_toxin_MLD"/>
</dbReference>
<dbReference type="InterPro" id="IPR038765">
    <property type="entry name" value="Papain-like_cys_pep_sf"/>
</dbReference>
<dbReference type="InterPro" id="IPR048461">
    <property type="entry name" value="ToxA-like_C2"/>
</dbReference>
<dbReference type="InterPro" id="IPR054135">
    <property type="entry name" value="ToxA_barrel"/>
</dbReference>
<dbReference type="InterPro" id="IPR048460">
    <property type="entry name" value="ToxA_C3"/>
</dbReference>
<dbReference type="InterPro" id="IPR046673">
    <property type="entry name" value="ToxA_N"/>
</dbReference>
<dbReference type="Pfam" id="PF11647">
    <property type="entry name" value="MLD"/>
    <property type="match status" value="1"/>
</dbReference>
<dbReference type="Pfam" id="PF20899">
    <property type="entry name" value="PMT_C2"/>
    <property type="match status" value="1"/>
</dbReference>
<dbReference type="Pfam" id="PF20900">
    <property type="entry name" value="PMT_C3"/>
    <property type="match status" value="1"/>
</dbReference>
<dbReference type="Pfam" id="PF22771">
    <property type="entry name" value="ToxA_barrel"/>
    <property type="match status" value="1"/>
</dbReference>
<dbReference type="Pfam" id="PF20178">
    <property type="entry name" value="ToxA_N"/>
    <property type="match status" value="1"/>
</dbReference>
<dbReference type="SUPFAM" id="SSF54001">
    <property type="entry name" value="Cysteine proteinases"/>
    <property type="match status" value="1"/>
</dbReference>
<dbReference type="SUPFAM" id="SSF159501">
    <property type="entry name" value="EreA/ChaN-like"/>
    <property type="match status" value="1"/>
</dbReference>
<dbReference type="SUPFAM" id="SSF158842">
    <property type="entry name" value="PMT central region-like"/>
    <property type="match status" value="1"/>
</dbReference>
<feature type="chain" id="PRO_0000072635" description="Dermonecrotic toxin">
    <location>
        <begin position="1"/>
        <end position="1285"/>
    </location>
</feature>
<feature type="transmembrane region" description="Helical" evidence="1">
    <location>
        <begin position="402"/>
        <end position="422"/>
    </location>
</feature>
<feature type="sequence variant" description="In strain: CVI 47459.">
    <original>F</original>
    <variation>Y</variation>
    <location>
        <position position="853"/>
    </location>
</feature>
<feature type="sequence conflict" description="In Ref. 1; CAA35885." evidence="2" ref="1">
    <original>A</original>
    <variation>R</variation>
    <location>
        <position position="304"/>
    </location>
</feature>
<feature type="sequence conflict" description="In Ref. 1; CAA35885." evidence="2" ref="1">
    <original>A</original>
    <variation>R</variation>
    <location>
        <position position="775"/>
    </location>
</feature>
<feature type="strand" evidence="5">
    <location>
        <begin position="578"/>
        <end position="580"/>
    </location>
</feature>
<feature type="helix" evidence="3">
    <location>
        <begin position="593"/>
        <end position="599"/>
    </location>
</feature>
<feature type="strand" evidence="6">
    <location>
        <begin position="601"/>
        <end position="603"/>
    </location>
</feature>
<feature type="helix" evidence="3">
    <location>
        <begin position="609"/>
        <end position="623"/>
    </location>
</feature>
<feature type="turn" evidence="6">
    <location>
        <begin position="624"/>
        <end position="626"/>
    </location>
</feature>
<feature type="helix" evidence="3">
    <location>
        <begin position="627"/>
        <end position="647"/>
    </location>
</feature>
<feature type="turn" evidence="6">
    <location>
        <begin position="650"/>
        <end position="653"/>
    </location>
</feature>
<feature type="helix" evidence="3">
    <location>
        <begin position="654"/>
        <end position="668"/>
    </location>
</feature>
<feature type="helix" evidence="3">
    <location>
        <begin position="671"/>
        <end position="673"/>
    </location>
</feature>
<feature type="helix" evidence="3">
    <location>
        <begin position="674"/>
        <end position="682"/>
    </location>
</feature>
<feature type="helix" evidence="3">
    <location>
        <begin position="690"/>
        <end position="702"/>
    </location>
</feature>
<feature type="helix" evidence="3">
    <location>
        <begin position="710"/>
        <end position="719"/>
    </location>
</feature>
<feature type="turn" evidence="3">
    <location>
        <begin position="721"/>
        <end position="724"/>
    </location>
</feature>
<feature type="strand" evidence="3">
    <location>
        <begin position="744"/>
        <end position="747"/>
    </location>
</feature>
<feature type="helix" evidence="3">
    <location>
        <begin position="749"/>
        <end position="753"/>
    </location>
</feature>
<feature type="strand" evidence="3">
    <location>
        <begin position="754"/>
        <end position="756"/>
    </location>
</feature>
<feature type="turn" evidence="3">
    <location>
        <begin position="759"/>
        <end position="761"/>
    </location>
</feature>
<feature type="helix" evidence="3">
    <location>
        <begin position="763"/>
        <end position="765"/>
    </location>
</feature>
<feature type="turn" evidence="3">
    <location>
        <begin position="766"/>
        <end position="769"/>
    </location>
</feature>
<feature type="helix" evidence="3">
    <location>
        <begin position="773"/>
        <end position="787"/>
    </location>
</feature>
<feature type="strand" evidence="3">
    <location>
        <begin position="788"/>
        <end position="790"/>
    </location>
</feature>
<feature type="strand" evidence="3">
    <location>
        <begin position="793"/>
        <end position="796"/>
    </location>
</feature>
<feature type="strand" evidence="3">
    <location>
        <begin position="799"/>
        <end position="802"/>
    </location>
</feature>
<feature type="helix" evidence="3">
    <location>
        <begin position="806"/>
        <end position="812"/>
    </location>
</feature>
<feature type="turn" evidence="3">
    <location>
        <begin position="815"/>
        <end position="817"/>
    </location>
</feature>
<feature type="strand" evidence="3">
    <location>
        <begin position="822"/>
        <end position="824"/>
    </location>
</feature>
<feature type="helix" evidence="3">
    <location>
        <begin position="827"/>
        <end position="839"/>
    </location>
</feature>
<feature type="helix" evidence="3">
    <location>
        <begin position="844"/>
        <end position="848"/>
    </location>
</feature>
<feature type="helix" evidence="3">
    <location>
        <begin position="851"/>
        <end position="872"/>
    </location>
</feature>
<feature type="helix" evidence="3">
    <location>
        <begin position="878"/>
        <end position="884"/>
    </location>
</feature>
<feature type="helix" evidence="3">
    <location>
        <begin position="889"/>
        <end position="895"/>
    </location>
</feature>
<feature type="helix" evidence="3">
    <location>
        <begin position="898"/>
        <end position="907"/>
    </location>
</feature>
<feature type="strand" evidence="3">
    <location>
        <begin position="910"/>
        <end position="916"/>
    </location>
</feature>
<feature type="helix" evidence="3">
    <location>
        <begin position="918"/>
        <end position="926"/>
    </location>
</feature>
<feature type="helix" evidence="3">
    <location>
        <begin position="928"/>
        <end position="933"/>
    </location>
</feature>
<feature type="strand" evidence="3">
    <location>
        <begin position="938"/>
        <end position="945"/>
    </location>
</feature>
<feature type="helix" evidence="3">
    <location>
        <begin position="946"/>
        <end position="957"/>
    </location>
</feature>
<feature type="helix" evidence="3">
    <location>
        <begin position="964"/>
        <end position="973"/>
    </location>
</feature>
<feature type="turn" evidence="3">
    <location>
        <begin position="974"/>
        <end position="976"/>
    </location>
</feature>
<feature type="helix" evidence="3">
    <location>
        <begin position="981"/>
        <end position="991"/>
    </location>
</feature>
<feature type="strand" evidence="3">
    <location>
        <begin position="995"/>
        <end position="1000"/>
    </location>
</feature>
<feature type="helix" evidence="3">
    <location>
        <begin position="1012"/>
        <end position="1029"/>
    </location>
</feature>
<feature type="strand" evidence="3">
    <location>
        <begin position="1037"/>
        <end position="1041"/>
    </location>
</feature>
<feature type="helix" evidence="3">
    <location>
        <begin position="1043"/>
        <end position="1046"/>
    </location>
</feature>
<feature type="strand" evidence="3">
    <location>
        <begin position="1049"/>
        <end position="1056"/>
    </location>
</feature>
<feature type="helix" evidence="3">
    <location>
        <begin position="1059"/>
        <end position="1063"/>
    </location>
</feature>
<feature type="strand" evidence="3">
    <location>
        <begin position="1067"/>
        <end position="1070"/>
    </location>
</feature>
<feature type="strand" evidence="3">
    <location>
        <begin position="1076"/>
        <end position="1078"/>
    </location>
</feature>
<feature type="helix" evidence="3">
    <location>
        <begin position="1083"/>
        <end position="1085"/>
    </location>
</feature>
<feature type="strand" evidence="3">
    <location>
        <begin position="1086"/>
        <end position="1088"/>
    </location>
</feature>
<feature type="strand" evidence="3">
    <location>
        <begin position="1103"/>
        <end position="1107"/>
    </location>
</feature>
<feature type="strand" evidence="3">
    <location>
        <begin position="1110"/>
        <end position="1112"/>
    </location>
</feature>
<feature type="strand" evidence="3">
    <location>
        <begin position="1116"/>
        <end position="1119"/>
    </location>
</feature>
<feature type="helix" evidence="3">
    <location>
        <begin position="1122"/>
        <end position="1130"/>
    </location>
</feature>
<feature type="helix" evidence="3">
    <location>
        <begin position="1135"/>
        <end position="1149"/>
    </location>
</feature>
<feature type="helix" evidence="3">
    <location>
        <begin position="1152"/>
        <end position="1156"/>
    </location>
</feature>
<feature type="turn" evidence="4">
    <location>
        <begin position="1162"/>
        <end position="1164"/>
    </location>
</feature>
<feature type="helix" evidence="3">
    <location>
        <begin position="1168"/>
        <end position="1178"/>
    </location>
</feature>
<feature type="strand" evidence="3">
    <location>
        <begin position="1187"/>
        <end position="1195"/>
    </location>
</feature>
<feature type="turn" evidence="3">
    <location>
        <begin position="1196"/>
        <end position="1198"/>
    </location>
</feature>
<feature type="strand" evidence="3">
    <location>
        <begin position="1199"/>
        <end position="1212"/>
    </location>
</feature>
<feature type="strand" evidence="3">
    <location>
        <begin position="1215"/>
        <end position="1220"/>
    </location>
</feature>
<feature type="helix" evidence="3">
    <location>
        <begin position="1223"/>
        <end position="1225"/>
    </location>
</feature>
<feature type="strand" evidence="5">
    <location>
        <begin position="1230"/>
        <end position="1232"/>
    </location>
</feature>
<feature type="strand" evidence="3">
    <location>
        <begin position="1234"/>
        <end position="1239"/>
    </location>
</feature>
<feature type="helix" evidence="3">
    <location>
        <begin position="1240"/>
        <end position="1250"/>
    </location>
</feature>
<feature type="strand" evidence="3">
    <location>
        <begin position="1254"/>
        <end position="1261"/>
    </location>
</feature>
<feature type="helix" evidence="3">
    <location>
        <begin position="1265"/>
        <end position="1269"/>
    </location>
</feature>
<feature type="helix" evidence="3">
    <location>
        <begin position="1275"/>
        <end position="1277"/>
    </location>
</feature>
<protein>
    <recommendedName>
        <fullName>Dermonecrotic toxin</fullName>
        <shortName>DNT</shortName>
    </recommendedName>
    <alternativeName>
        <fullName>Mitogenic toxin</fullName>
    </alternativeName>
    <alternativeName>
        <fullName>PMT</fullName>
    </alternativeName>
</protein>
<organism>
    <name type="scientific">Pasteurella multocida</name>
    <dbReference type="NCBI Taxonomy" id="747"/>
    <lineage>
        <taxon>Bacteria</taxon>
        <taxon>Pseudomonadati</taxon>
        <taxon>Pseudomonadota</taxon>
        <taxon>Gammaproteobacteria</taxon>
        <taxon>Pasteurellales</taxon>
        <taxon>Pasteurellaceae</taxon>
        <taxon>Pasteurella</taxon>
    </lineage>
</organism>